<sequence length="117" mass="12670">MAFLMSEFIGLGLAGAGVLSNALLRRQELQLQKQAMENGLVLKADQLGRLGFNPNEVKNVIVGNSFSSNVRLSNMHNDASVVNAYNVYNPASNGIRKKIKSLNNSVKIYNTTGESSV</sequence>
<name>VP2_RHDVF</name>
<organismHost>
    <name type="scientific">Oryctolagus cuniculus</name>
    <name type="common">Rabbit</name>
    <dbReference type="NCBI Taxonomy" id="9986"/>
</organismHost>
<feature type="chain" id="PRO_0000100128" description="Minor capsid protein VP2">
    <location>
        <begin position="1"/>
        <end position="117"/>
    </location>
</feature>
<protein>
    <recommendedName>
        <fullName>Minor capsid protein VP2</fullName>
    </recommendedName>
</protein>
<dbReference type="EMBL" id="M67473">
    <property type="protein sequence ID" value="AAA47286.1"/>
    <property type="molecule type" value="Genomic_RNA"/>
</dbReference>
<dbReference type="PIR" id="B41039">
    <property type="entry name" value="VCWWRH"/>
</dbReference>
<dbReference type="RefSeq" id="NP_062876.1">
    <property type="nucleotide sequence ID" value="NC_001543.1"/>
</dbReference>
<dbReference type="KEGG" id="vg:1491967"/>
<dbReference type="Proteomes" id="UP000000413">
    <property type="component" value="Genome"/>
</dbReference>
<dbReference type="GO" id="GO:0030430">
    <property type="term" value="C:host cell cytoplasm"/>
    <property type="evidence" value="ECO:0007669"/>
    <property type="project" value="UniProtKB-SubCell"/>
</dbReference>
<dbReference type="GO" id="GO:0098021">
    <property type="term" value="C:viral capsid, decoration"/>
    <property type="evidence" value="ECO:0007669"/>
    <property type="project" value="UniProtKB-KW"/>
</dbReference>
<dbReference type="InterPro" id="IPR008558">
    <property type="entry name" value="VP2_lagovirus"/>
</dbReference>
<dbReference type="Pfam" id="PF05801">
    <property type="entry name" value="VP2_lagovir"/>
    <property type="match status" value="1"/>
</dbReference>
<gene>
    <name type="ORF">ORF2</name>
</gene>
<keyword id="KW-1232">Capsid decoration protein</keyword>
<keyword id="KW-0167">Capsid protein</keyword>
<keyword id="KW-1035">Host cytoplasm</keyword>
<keyword id="KW-1185">Reference proteome</keyword>
<keyword id="KW-0946">Virion</keyword>
<accession>P27412</accession>
<evidence type="ECO:0000250" key="1">
    <source>
        <dbReference type="UniProtKB" id="P28711"/>
    </source>
</evidence>
<evidence type="ECO:0000305" key="2"/>
<comment type="function">
    <text evidence="1">Minor structural protein that forms a portal-like structure at a unique three-fold axis of symmetry, following binding to the host receptor. The channel formed by VP2 may allow the delivery of the viral genome through the host endosomal membrane.</text>
</comment>
<comment type="subunit">
    <text evidence="1">Homooligomer. The portal-like structure consists in 12 copies of VP2. Interacts with capsid protein VP1.</text>
</comment>
<comment type="subcellular location">
    <subcellularLocation>
        <location evidence="1">Virion</location>
    </subcellularLocation>
    <subcellularLocation>
        <location evidence="2">Host cytoplasm</location>
    </subcellularLocation>
</comment>
<comment type="domain">
    <text evidence="1">The N-terminus domain points away from the virion surface.</text>
</comment>
<comment type="miscellaneous">
    <text evidence="1">Translated by a ribosomal termination-reinitiation process from the bicistronic mRNA coding for VP1 and VP2.</text>
</comment>
<comment type="similarity">
    <text evidence="2">Belongs to the lagovirus VP2 protein family.</text>
</comment>
<proteinExistence type="inferred from homology"/>
<organism>
    <name type="scientific">Rabbit hemorrhagic disease virus (strain Rabbit/Germany/FRG/1989)</name>
    <name type="common">Ra/LV/RHDV/GH/1989/GE</name>
    <name type="synonym">RHDV-FRG</name>
    <dbReference type="NCBI Taxonomy" id="314536"/>
    <lineage>
        <taxon>Viruses</taxon>
        <taxon>Riboviria</taxon>
        <taxon>Orthornavirae</taxon>
        <taxon>Pisuviricota</taxon>
        <taxon>Pisoniviricetes</taxon>
        <taxon>Picornavirales</taxon>
        <taxon>Caliciviridae</taxon>
        <taxon>Lagovirus</taxon>
        <taxon>Rabbit hemorrhagic disease virus</taxon>
    </lineage>
</organism>
<reference key="1">
    <citation type="journal article" date="1991" name="Virology">
        <title>Rabbit hemorrhagic disease virus -- molecular cloning and nucleotide sequencing of a calicivirus genome.</title>
        <authorList>
            <person name="Meyers G."/>
            <person name="Wirblich C."/>
            <person name="Thiel H.-J."/>
        </authorList>
    </citation>
    <scope>NUCLEOTIDE SEQUENCE [GENOMIC RNA]</scope>
</reference>